<dbReference type="EC" id="2.7.7.60" evidence="1"/>
<dbReference type="EMBL" id="CP000447">
    <property type="protein sequence ID" value="ABI70907.1"/>
    <property type="molecule type" value="Genomic_DNA"/>
</dbReference>
<dbReference type="RefSeq" id="WP_011636528.1">
    <property type="nucleotide sequence ID" value="NC_008345.1"/>
</dbReference>
<dbReference type="SMR" id="Q086A8"/>
<dbReference type="STRING" id="318167.Sfri_1054"/>
<dbReference type="KEGG" id="sfr:Sfri_1054"/>
<dbReference type="eggNOG" id="COG1211">
    <property type="taxonomic scope" value="Bacteria"/>
</dbReference>
<dbReference type="HOGENOM" id="CLU_061281_3_1_6"/>
<dbReference type="OrthoDB" id="9806837at2"/>
<dbReference type="UniPathway" id="UPA00056">
    <property type="reaction ID" value="UER00093"/>
</dbReference>
<dbReference type="Proteomes" id="UP000000684">
    <property type="component" value="Chromosome"/>
</dbReference>
<dbReference type="GO" id="GO:0050518">
    <property type="term" value="F:2-C-methyl-D-erythritol 4-phosphate cytidylyltransferase activity"/>
    <property type="evidence" value="ECO:0007669"/>
    <property type="project" value="UniProtKB-UniRule"/>
</dbReference>
<dbReference type="GO" id="GO:0019288">
    <property type="term" value="P:isopentenyl diphosphate biosynthetic process, methylerythritol 4-phosphate pathway"/>
    <property type="evidence" value="ECO:0007669"/>
    <property type="project" value="UniProtKB-UniRule"/>
</dbReference>
<dbReference type="CDD" id="cd02516">
    <property type="entry name" value="CDP-ME_synthetase"/>
    <property type="match status" value="1"/>
</dbReference>
<dbReference type="FunFam" id="3.90.550.10:FF:000003">
    <property type="entry name" value="2-C-methyl-D-erythritol 4-phosphate cytidylyltransferase"/>
    <property type="match status" value="1"/>
</dbReference>
<dbReference type="Gene3D" id="3.90.550.10">
    <property type="entry name" value="Spore Coat Polysaccharide Biosynthesis Protein SpsA, Chain A"/>
    <property type="match status" value="1"/>
</dbReference>
<dbReference type="HAMAP" id="MF_00108">
    <property type="entry name" value="IspD"/>
    <property type="match status" value="1"/>
</dbReference>
<dbReference type="InterPro" id="IPR001228">
    <property type="entry name" value="IspD"/>
</dbReference>
<dbReference type="InterPro" id="IPR034683">
    <property type="entry name" value="IspD/TarI"/>
</dbReference>
<dbReference type="InterPro" id="IPR050088">
    <property type="entry name" value="IspD/TarI_cytidylyltransf_bact"/>
</dbReference>
<dbReference type="InterPro" id="IPR029044">
    <property type="entry name" value="Nucleotide-diphossugar_trans"/>
</dbReference>
<dbReference type="NCBIfam" id="TIGR00453">
    <property type="entry name" value="ispD"/>
    <property type="match status" value="1"/>
</dbReference>
<dbReference type="PANTHER" id="PTHR32125">
    <property type="entry name" value="2-C-METHYL-D-ERYTHRITOL 4-PHOSPHATE CYTIDYLYLTRANSFERASE, CHLOROPLASTIC"/>
    <property type="match status" value="1"/>
</dbReference>
<dbReference type="PANTHER" id="PTHR32125:SF4">
    <property type="entry name" value="2-C-METHYL-D-ERYTHRITOL 4-PHOSPHATE CYTIDYLYLTRANSFERASE, CHLOROPLASTIC"/>
    <property type="match status" value="1"/>
</dbReference>
<dbReference type="Pfam" id="PF01128">
    <property type="entry name" value="IspD"/>
    <property type="match status" value="1"/>
</dbReference>
<dbReference type="SUPFAM" id="SSF53448">
    <property type="entry name" value="Nucleotide-diphospho-sugar transferases"/>
    <property type="match status" value="1"/>
</dbReference>
<evidence type="ECO:0000255" key="1">
    <source>
        <dbReference type="HAMAP-Rule" id="MF_00108"/>
    </source>
</evidence>
<proteinExistence type="inferred from homology"/>
<name>ISPD_SHEFN</name>
<organism>
    <name type="scientific">Shewanella frigidimarina (strain NCIMB 400)</name>
    <dbReference type="NCBI Taxonomy" id="318167"/>
    <lineage>
        <taxon>Bacteria</taxon>
        <taxon>Pseudomonadati</taxon>
        <taxon>Pseudomonadota</taxon>
        <taxon>Gammaproteobacteria</taxon>
        <taxon>Alteromonadales</taxon>
        <taxon>Shewanellaceae</taxon>
        <taxon>Shewanella</taxon>
    </lineage>
</organism>
<accession>Q086A8</accession>
<protein>
    <recommendedName>
        <fullName evidence="1">2-C-methyl-D-erythritol 4-phosphate cytidylyltransferase</fullName>
        <ecNumber evidence="1">2.7.7.60</ecNumber>
    </recommendedName>
    <alternativeName>
        <fullName evidence="1">4-diphosphocytidyl-2C-methyl-D-erythritol synthase</fullName>
    </alternativeName>
    <alternativeName>
        <fullName evidence="1">MEP cytidylyltransferase</fullName>
        <shortName evidence="1">MCT</shortName>
    </alternativeName>
</protein>
<comment type="function">
    <text evidence="1">Catalyzes the formation of 4-diphosphocytidyl-2-C-methyl-D-erythritol from CTP and 2-C-methyl-D-erythritol 4-phosphate (MEP).</text>
</comment>
<comment type="catalytic activity">
    <reaction evidence="1">
        <text>2-C-methyl-D-erythritol 4-phosphate + CTP + H(+) = 4-CDP-2-C-methyl-D-erythritol + diphosphate</text>
        <dbReference type="Rhea" id="RHEA:13429"/>
        <dbReference type="ChEBI" id="CHEBI:15378"/>
        <dbReference type="ChEBI" id="CHEBI:33019"/>
        <dbReference type="ChEBI" id="CHEBI:37563"/>
        <dbReference type="ChEBI" id="CHEBI:57823"/>
        <dbReference type="ChEBI" id="CHEBI:58262"/>
        <dbReference type="EC" id="2.7.7.60"/>
    </reaction>
</comment>
<comment type="pathway">
    <text evidence="1">Isoprenoid biosynthesis; isopentenyl diphosphate biosynthesis via DXP pathway; isopentenyl diphosphate from 1-deoxy-D-xylulose 5-phosphate: step 2/6.</text>
</comment>
<comment type="similarity">
    <text evidence="1">Belongs to the IspD/TarI cytidylyltransferase family. IspD subfamily.</text>
</comment>
<keyword id="KW-0414">Isoprene biosynthesis</keyword>
<keyword id="KW-0548">Nucleotidyltransferase</keyword>
<keyword id="KW-1185">Reference proteome</keyword>
<keyword id="KW-0808">Transferase</keyword>
<sequence>MSNNPRSIIAIVPAAGIGSRMGADKPKQYLMLGQQSILGHTLDTLLAHPDIEQVIVALHPQDNYFNQLPQSQHPKLTQVVGGGERADSVLAALDYAHNYNPGAWALVHDAARPCVTHQDITQLIKSVAIHPQGAILAAPVCDTMKRSDASGLIVHTVDRSLLWHALTPQFFPVSILRTHLSAALAAQVPITDEASAMEWAGVMPGLVNGRMDNIKVTHPDDLQLAALFMSQQ</sequence>
<gene>
    <name evidence="1" type="primary">ispD</name>
    <name type="ordered locus">Sfri_1054</name>
</gene>
<reference key="1">
    <citation type="submission" date="2006-08" db="EMBL/GenBank/DDBJ databases">
        <title>Complete sequence of Shewanella frigidimarina NCIMB 400.</title>
        <authorList>
            <consortium name="US DOE Joint Genome Institute"/>
            <person name="Copeland A."/>
            <person name="Lucas S."/>
            <person name="Lapidus A."/>
            <person name="Barry K."/>
            <person name="Detter J.C."/>
            <person name="Glavina del Rio T."/>
            <person name="Hammon N."/>
            <person name="Israni S."/>
            <person name="Dalin E."/>
            <person name="Tice H."/>
            <person name="Pitluck S."/>
            <person name="Fredrickson J.K."/>
            <person name="Kolker E."/>
            <person name="McCuel L.A."/>
            <person name="DiChristina T."/>
            <person name="Nealson K.H."/>
            <person name="Newman D."/>
            <person name="Tiedje J.M."/>
            <person name="Zhou J."/>
            <person name="Romine M.F."/>
            <person name="Culley D.E."/>
            <person name="Serres M."/>
            <person name="Chertkov O."/>
            <person name="Brettin T."/>
            <person name="Bruce D."/>
            <person name="Han C."/>
            <person name="Tapia R."/>
            <person name="Gilna P."/>
            <person name="Schmutz J."/>
            <person name="Larimer F."/>
            <person name="Land M."/>
            <person name="Hauser L."/>
            <person name="Kyrpides N."/>
            <person name="Mikhailova N."/>
            <person name="Richardson P."/>
        </authorList>
    </citation>
    <scope>NUCLEOTIDE SEQUENCE [LARGE SCALE GENOMIC DNA]</scope>
    <source>
        <strain>NCIMB 400</strain>
    </source>
</reference>
<feature type="chain" id="PRO_1000071321" description="2-C-methyl-D-erythritol 4-phosphate cytidylyltransferase">
    <location>
        <begin position="1"/>
        <end position="232"/>
    </location>
</feature>
<feature type="site" description="Transition state stabilizer" evidence="1">
    <location>
        <position position="20"/>
    </location>
</feature>
<feature type="site" description="Transition state stabilizer" evidence="1">
    <location>
        <position position="27"/>
    </location>
</feature>
<feature type="site" description="Positions MEP for the nucleophilic attack" evidence="1">
    <location>
        <position position="159"/>
    </location>
</feature>
<feature type="site" description="Positions MEP for the nucleophilic attack" evidence="1">
    <location>
        <position position="215"/>
    </location>
</feature>